<accession>P9WPL4</accession>
<accession>D0EW73</accession>
<accession>F2GEM8</accession>
<accession>O53563</accession>
<keyword id="KW-0153">Cholesterol metabolism</keyword>
<keyword id="KW-0349">Heme</keyword>
<keyword id="KW-0408">Iron</keyword>
<keyword id="KW-0442">Lipid degradation</keyword>
<keyword id="KW-0443">Lipid metabolism</keyword>
<keyword id="KW-0479">Metal-binding</keyword>
<keyword id="KW-0503">Monooxygenase</keyword>
<keyword id="KW-0521">NADP</keyword>
<keyword id="KW-0560">Oxidoreductase</keyword>
<keyword id="KW-1185">Reference proteome</keyword>
<keyword id="KW-0753">Steroid metabolism</keyword>
<keyword id="KW-1207">Sterol metabolism</keyword>
<keyword id="KW-0843">Virulence</keyword>
<feature type="chain" id="PRO_0000426931" description="Steroid C26-monooxygenase">
    <location>
        <begin position="1"/>
        <end position="372"/>
    </location>
</feature>
<feature type="binding site" description="axial binding residue" evidence="1">
    <location>
        <position position="314"/>
    </location>
    <ligand>
        <name>heme</name>
        <dbReference type="ChEBI" id="CHEBI:30413"/>
    </ligand>
    <ligandPart>
        <name>Fe</name>
        <dbReference type="ChEBI" id="CHEBI:18248"/>
    </ligandPart>
</feature>
<dbReference type="EC" id="1.14.15.28" evidence="1"/>
<dbReference type="EMBL" id="AE000516">
    <property type="protein sequence ID" value="AAK47979.1"/>
    <property type="molecule type" value="Genomic_DNA"/>
</dbReference>
<dbReference type="PIR" id="H70807">
    <property type="entry name" value="H70807"/>
</dbReference>
<dbReference type="RefSeq" id="WP_003917809.1">
    <property type="nucleotide sequence ID" value="NC_002755.2"/>
</dbReference>
<dbReference type="SMR" id="P9WPL4"/>
<dbReference type="BindingDB" id="P9WPL4"/>
<dbReference type="KEGG" id="mtc:MT3619"/>
<dbReference type="PATRIC" id="fig|83331.31.peg.3898"/>
<dbReference type="HOGENOM" id="CLU_033716_0_2_11"/>
<dbReference type="UniPathway" id="UPA01058"/>
<dbReference type="Proteomes" id="UP000001020">
    <property type="component" value="Chromosome"/>
</dbReference>
<dbReference type="GO" id="GO:0036199">
    <property type="term" value="F:cholest-4-en-3-one 26-monooxygenase activity"/>
    <property type="evidence" value="ECO:0000250"/>
    <property type="project" value="UniProtKB"/>
</dbReference>
<dbReference type="GO" id="GO:0031073">
    <property type="term" value="F:cholesterol 26-hydroxylase activity"/>
    <property type="evidence" value="ECO:0000250"/>
    <property type="project" value="UniProtKB"/>
</dbReference>
<dbReference type="GO" id="GO:0020037">
    <property type="term" value="F:heme binding"/>
    <property type="evidence" value="ECO:0000250"/>
    <property type="project" value="UniProtKB"/>
</dbReference>
<dbReference type="GO" id="GO:0005506">
    <property type="term" value="F:iron ion binding"/>
    <property type="evidence" value="ECO:0007669"/>
    <property type="project" value="InterPro"/>
</dbReference>
<dbReference type="GO" id="GO:0006707">
    <property type="term" value="P:cholesterol catabolic process"/>
    <property type="evidence" value="ECO:0000250"/>
    <property type="project" value="UniProtKB"/>
</dbReference>
<dbReference type="CDD" id="cd11033">
    <property type="entry name" value="CYP142-like"/>
    <property type="match status" value="1"/>
</dbReference>
<dbReference type="FunFam" id="1.10.630.10:FF:000018">
    <property type="entry name" value="Cytochrome P450 monooxygenase"/>
    <property type="match status" value="1"/>
</dbReference>
<dbReference type="Gene3D" id="1.10.630.10">
    <property type="entry name" value="Cytochrome P450"/>
    <property type="match status" value="1"/>
</dbReference>
<dbReference type="InterPro" id="IPR001128">
    <property type="entry name" value="Cyt_P450"/>
</dbReference>
<dbReference type="InterPro" id="IPR002397">
    <property type="entry name" value="Cyt_P450_B"/>
</dbReference>
<dbReference type="InterPro" id="IPR017972">
    <property type="entry name" value="Cyt_P450_CS"/>
</dbReference>
<dbReference type="InterPro" id="IPR036396">
    <property type="entry name" value="Cyt_P450_sf"/>
</dbReference>
<dbReference type="PANTHER" id="PTHR46696:SF4">
    <property type="entry name" value="BIOTIN BIOSYNTHESIS CYTOCHROME P450"/>
    <property type="match status" value="1"/>
</dbReference>
<dbReference type="PANTHER" id="PTHR46696">
    <property type="entry name" value="P450, PUTATIVE (EUROFUNG)-RELATED"/>
    <property type="match status" value="1"/>
</dbReference>
<dbReference type="Pfam" id="PF00067">
    <property type="entry name" value="p450"/>
    <property type="match status" value="1"/>
</dbReference>
<dbReference type="PRINTS" id="PR00359">
    <property type="entry name" value="BP450"/>
</dbReference>
<dbReference type="PRINTS" id="PR00385">
    <property type="entry name" value="P450"/>
</dbReference>
<dbReference type="SUPFAM" id="SSF48264">
    <property type="entry name" value="Cytochrome P450"/>
    <property type="match status" value="1"/>
</dbReference>
<dbReference type="PROSITE" id="PS00086">
    <property type="entry name" value="CYTOCHROME_P450"/>
    <property type="match status" value="1"/>
</dbReference>
<comment type="function">
    <text evidence="1">Involved in the utilization of cholesterol as the sole carbon and energy source by degrading the side chain during infection. Primarily catalyzes the sequential oxidation of the terminal methyl of cholest-4-en-3-one into (25R)-26-hydroxycholest-4-en-3-one (alcohol), (25R)-26-oxocholest-4-en-3-one (aldehyde), to finally yield the carboxylic acid (25R)-3-oxocholest-4-en-26-oate. Also able to sequentially oxidize cholesterol itself, not only cholest-4-en-3-one.</text>
</comment>
<comment type="catalytic activity">
    <reaction evidence="1">
        <text>cholest-4-en-3-one + 6 reduced [2Fe-2S]-[ferredoxin] + 3 O2 + 5 H(+) = (25R)-3-oxocholest-4-en-26-oate + 6 oxidized [2Fe-2S]-[ferredoxin] + 4 H2O</text>
        <dbReference type="Rhea" id="RHEA:49996"/>
        <dbReference type="Rhea" id="RHEA-COMP:10000"/>
        <dbReference type="Rhea" id="RHEA-COMP:10001"/>
        <dbReference type="ChEBI" id="CHEBI:15377"/>
        <dbReference type="ChEBI" id="CHEBI:15378"/>
        <dbReference type="ChEBI" id="CHEBI:15379"/>
        <dbReference type="ChEBI" id="CHEBI:16175"/>
        <dbReference type="ChEBI" id="CHEBI:33737"/>
        <dbReference type="ChEBI" id="CHEBI:33738"/>
        <dbReference type="ChEBI" id="CHEBI:71570"/>
        <dbReference type="EC" id="1.14.15.28"/>
    </reaction>
</comment>
<comment type="cofactor">
    <cofactor evidence="1">
        <name>heme</name>
        <dbReference type="ChEBI" id="CHEBI:30413"/>
    </cofactor>
</comment>
<comment type="pathway">
    <text evidence="1">Steroid metabolism; cholesterol degradation.</text>
</comment>
<comment type="induction">
    <text evidence="1">By cholesterol.</text>
</comment>
<comment type="similarity">
    <text evidence="2">Belongs to the cytochrome P450 family.</text>
</comment>
<reference key="1">
    <citation type="journal article" date="2002" name="J. Bacteriol.">
        <title>Whole-genome comparison of Mycobacterium tuberculosis clinical and laboratory strains.</title>
        <authorList>
            <person name="Fleischmann R.D."/>
            <person name="Alland D."/>
            <person name="Eisen J.A."/>
            <person name="Carpenter L."/>
            <person name="White O."/>
            <person name="Peterson J.D."/>
            <person name="DeBoy R.T."/>
            <person name="Dodson R.J."/>
            <person name="Gwinn M.L."/>
            <person name="Haft D.H."/>
            <person name="Hickey E.K."/>
            <person name="Kolonay J.F."/>
            <person name="Nelson W.C."/>
            <person name="Umayam L.A."/>
            <person name="Ermolaeva M.D."/>
            <person name="Salzberg S.L."/>
            <person name="Delcher A."/>
            <person name="Utterback T.R."/>
            <person name="Weidman J.F."/>
            <person name="Khouri H.M."/>
            <person name="Gill J."/>
            <person name="Mikula A."/>
            <person name="Bishai W."/>
            <person name="Jacobs W.R. Jr."/>
            <person name="Venter J.C."/>
            <person name="Fraser C.M."/>
        </authorList>
    </citation>
    <scope>NUCLEOTIDE SEQUENCE [LARGE SCALE GENOMIC DNA]</scope>
    <source>
        <strain>CDC 1551 / Oshkosh</strain>
    </source>
</reference>
<protein>
    <recommendedName>
        <fullName evidence="1">Steroid C26-monooxygenase</fullName>
        <ecNumber evidence="1">1.14.15.28</ecNumber>
    </recommendedName>
    <alternativeName>
        <fullName evidence="1">Cholest-4-en-3-one C26-monooxygenase</fullName>
    </alternativeName>
    <alternativeName>
        <fullName evidence="1">Cholest-4-en-3-one C26-monooxygenase [(25R)-3-oxocholest-4-en-26-oate forming]</fullName>
    </alternativeName>
    <alternativeName>
        <fullName evidence="1">Cholesterol C26-monooxygenase</fullName>
    </alternativeName>
    <alternativeName>
        <fullName evidence="1">Cholesterol C26-monooxygenase [(25R)-3beta-hydroxycholest-5-en-26-oate forming]</fullName>
    </alternativeName>
    <alternativeName>
        <fullName evidence="1">Cytochrome P450 142</fullName>
    </alternativeName>
    <alternativeName>
        <fullName evidence="1">Steroid C27-monooxygenase</fullName>
    </alternativeName>
</protein>
<organism>
    <name type="scientific">Mycobacterium tuberculosis (strain CDC 1551 / Oshkosh)</name>
    <dbReference type="NCBI Taxonomy" id="83331"/>
    <lineage>
        <taxon>Bacteria</taxon>
        <taxon>Bacillati</taxon>
        <taxon>Actinomycetota</taxon>
        <taxon>Actinomycetes</taxon>
        <taxon>Mycobacteriales</taxon>
        <taxon>Mycobacteriaceae</taxon>
        <taxon>Mycobacterium</taxon>
        <taxon>Mycobacterium tuberculosis complex</taxon>
    </lineage>
</organism>
<sequence length="372" mass="41440">MRANQPVFRDRNGLAAASTYQAVIDAERQPELFSNAGGIRPDQPALPMMIDMDDPAHLLRRKLVNAGFTRKRVKDKEASIAALCDTLIDAVCERGECDFVRDLAAPLPMAVIGDMLGVRPEQRDMFLRWSDDLVTFLSSHVSQEDFQITMDAFAAYNDFTRATIAARRADPTDDLVSVLVSSEVDGERLSDDELVMETLLILIGGDETTRHTLSGGTEQLLRNRDQWDLLQRDPSLLPGAIEEMLRWTAPVKNMCRVLTADTEFHGTALCAGEKMMLLFESANFDEAVFCEPEKFDVQRNPNSHLAFGFGTHFCLGNQLARLELSLMTERVLRRLPDLRLVADDSVLPLRPANFVSGLESMPVVFTPSPPLG</sequence>
<evidence type="ECO:0000250" key="1">
    <source>
        <dbReference type="UniProtKB" id="P9WPL5"/>
    </source>
</evidence>
<evidence type="ECO:0000305" key="2"/>
<proteinExistence type="inferred from homology"/>
<gene>
    <name type="primary">cyp142</name>
    <name type="ordered locus">MT3619</name>
</gene>
<name>CP142_MYCTO</name>